<organism>
    <name type="scientific">Echinococcus granulosus</name>
    <name type="common">Hydatid tapeworm</name>
    <dbReference type="NCBI Taxonomy" id="6210"/>
    <lineage>
        <taxon>Eukaryota</taxon>
        <taxon>Metazoa</taxon>
        <taxon>Spiralia</taxon>
        <taxon>Lophotrochozoa</taxon>
        <taxon>Platyhelminthes</taxon>
        <taxon>Cestoda</taxon>
        <taxon>Eucestoda</taxon>
        <taxon>Cyclophyllidea</taxon>
        <taxon>Taeniidae</taxon>
        <taxon>Echinococcus</taxon>
        <taxon>Echinococcus granulosus group</taxon>
    </lineage>
</organism>
<keyword id="KW-0963">Cytoplasm</keyword>
<keyword id="KW-0687">Ribonucleoprotein</keyword>
<keyword id="KW-0689">Ribosomal protein</keyword>
<feature type="chain" id="PRO_0000134354" description="Small ribosomal subunit protein uS2">
    <location>
        <begin position="1"/>
        <end position="268"/>
    </location>
</feature>
<feature type="region of interest" description="Laminin-binding">
    <location>
        <begin position="161"/>
        <end position="179"/>
    </location>
</feature>
<proteinExistence type="evidence at protein level"/>
<sequence length="268" mass="30000">MSGGIEALELKEDDIRLMVAAKVHLGSTNANYQMQQYVYDRNDEGNHIIHLNKTWEKLLLAARAICAIENPADVVIIGGQPTWQRGALKFGHYTGTTSVPGRFTPGAFTNQIQSGFKEPRLLIVCDPKGDHQPVREGSAVNIPVIGFCNTDSPLQCVDIGIPCNNDKYSIALMLWMLAREVRRIWGLDPRSQPGDVIMDLFLMREHVDEPPEGPEGEAQEPPFEQGKFDAAEAEAPEWPAESVSPRCWNAGARFRWCWWQLDSLRCKG</sequence>
<comment type="function">
    <text evidence="1 2">Required for the assembly and/or stability of the 40S ribosomal subunit. Required for the processing of the 20S rRNA-precursor to mature 18S rRNA in a late step of the maturation of 40S ribosomal subunits. Binds laminin.</text>
</comment>
<comment type="subunit">
    <text evidence="1">Component of the small ribosomal subunit. Mature ribosomes consist of a small (40S) and a large (60S) subunit. The 40S subunit contains about 33 different proteins and 1 molecule of RNA (18S). The 60S subunit contains about 49 different proteins and 3 molecules of RNA (28S, 5.8S and 5S). Interacts with ribosomal protein S21.</text>
</comment>
<comment type="subcellular location">
    <subcellularLocation>
        <location>Cytoplasm</location>
    </subcellularLocation>
</comment>
<comment type="similarity">
    <text evidence="1">Belongs to the universal ribosomal protein uS2 family.</text>
</comment>
<accession>P46770</accession>
<dbReference type="EMBL" id="L33460">
    <property type="protein sequence ID" value="AAB68315.1"/>
    <property type="molecule type" value="mRNA"/>
</dbReference>
<dbReference type="SMR" id="P46770"/>
<dbReference type="OrthoDB" id="414863at2759"/>
<dbReference type="Proteomes" id="UP000492820">
    <property type="component" value="Unplaced"/>
</dbReference>
<dbReference type="GO" id="GO:0022627">
    <property type="term" value="C:cytosolic small ribosomal subunit"/>
    <property type="evidence" value="ECO:0007669"/>
    <property type="project" value="UniProtKB-UniRule"/>
</dbReference>
<dbReference type="GO" id="GO:0003735">
    <property type="term" value="F:structural constituent of ribosome"/>
    <property type="evidence" value="ECO:0007669"/>
    <property type="project" value="UniProtKB-UniRule"/>
</dbReference>
<dbReference type="GO" id="GO:0000028">
    <property type="term" value="P:ribosomal small subunit assembly"/>
    <property type="evidence" value="ECO:0007669"/>
    <property type="project" value="UniProtKB-UniRule"/>
</dbReference>
<dbReference type="GO" id="GO:0006412">
    <property type="term" value="P:translation"/>
    <property type="evidence" value="ECO:0007669"/>
    <property type="project" value="UniProtKB-UniRule"/>
</dbReference>
<dbReference type="CDD" id="cd01425">
    <property type="entry name" value="RPS2"/>
    <property type="match status" value="1"/>
</dbReference>
<dbReference type="FunFam" id="3.40.50.10490:FF:000030">
    <property type="entry name" value="30S ribosomal protein S2"/>
    <property type="match status" value="1"/>
</dbReference>
<dbReference type="Gene3D" id="3.40.50.10490">
    <property type="entry name" value="Glucose-6-phosphate isomerase like protein, domain 1"/>
    <property type="match status" value="1"/>
</dbReference>
<dbReference type="HAMAP" id="MF_03015">
    <property type="entry name" value="Ribosomal_S2_euk"/>
    <property type="match status" value="1"/>
</dbReference>
<dbReference type="InterPro" id="IPR001865">
    <property type="entry name" value="Ribosomal_uS2"/>
</dbReference>
<dbReference type="InterPro" id="IPR018130">
    <property type="entry name" value="Ribosomal_uS2_CS"/>
</dbReference>
<dbReference type="InterPro" id="IPR027498">
    <property type="entry name" value="Ribosomal_uS2_euk"/>
</dbReference>
<dbReference type="InterPro" id="IPR005707">
    <property type="entry name" value="Ribosomal_uS2_euk/arc"/>
</dbReference>
<dbReference type="InterPro" id="IPR023591">
    <property type="entry name" value="Ribosomal_uS2_flav_dom_sf"/>
</dbReference>
<dbReference type="NCBIfam" id="TIGR01012">
    <property type="entry name" value="uS2_euk_arch"/>
    <property type="match status" value="1"/>
</dbReference>
<dbReference type="PANTHER" id="PTHR11489">
    <property type="entry name" value="40S RIBOSOMAL PROTEIN SA"/>
    <property type="match status" value="1"/>
</dbReference>
<dbReference type="Pfam" id="PF00318">
    <property type="entry name" value="Ribosomal_S2"/>
    <property type="match status" value="2"/>
</dbReference>
<dbReference type="PRINTS" id="PR00395">
    <property type="entry name" value="RIBOSOMALS2"/>
</dbReference>
<dbReference type="SUPFAM" id="SSF52313">
    <property type="entry name" value="Ribosomal protein S2"/>
    <property type="match status" value="1"/>
</dbReference>
<dbReference type="PROSITE" id="PS00962">
    <property type="entry name" value="RIBOSOMAL_S2_1"/>
    <property type="match status" value="1"/>
</dbReference>
<dbReference type="PROSITE" id="PS00963">
    <property type="entry name" value="RIBOSOMAL_S2_2"/>
    <property type="match status" value="1"/>
</dbReference>
<protein>
    <recommendedName>
        <fullName evidence="1">Small ribosomal subunit protein uS2</fullName>
    </recommendedName>
    <alternativeName>
        <fullName evidence="3">40S ribosomal protein SA</fullName>
    </alternativeName>
    <alternativeName>
        <fullName>Laminin-binding protein p40</fullName>
        <shortName>LBP/p40</shortName>
    </alternativeName>
</protein>
<name>RSSA_ECHGR</name>
<reference key="1">
    <citation type="journal article" date="1997" name="Mol. Biochem. Parasitol.">
        <title>Cloning and expression of a cDNA encoding a nonintegrin laminin-binding protein from Echinococcus granulosus with localization of the laminin-binding domain.</title>
        <authorList>
            <person name="Zhang L.H."/>
            <person name="Leggatt G.R."/>
            <person name="Kalinna B.H."/>
            <person name="Piva T.J."/>
            <person name="McManus D.P."/>
        </authorList>
    </citation>
    <scope>NUCLEOTIDE SEQUENCE [MRNA]</scope>
    <scope>FUNCTION</scope>
    <scope>LAMININ-BINDING</scope>
</reference>
<evidence type="ECO:0000255" key="1">
    <source>
        <dbReference type="HAMAP-Rule" id="MF_03015"/>
    </source>
</evidence>
<evidence type="ECO:0000269" key="2">
    <source>
    </source>
</evidence>
<evidence type="ECO:0000305" key="3"/>
<gene>
    <name type="primary">egmo3</name>
</gene>